<feature type="chain" id="PRO_0000076595" description="Basic leucine zipper transcriptional factor ATF-like">
    <location>
        <begin position="1"/>
        <end position="125"/>
    </location>
</feature>
<feature type="domain" description="bZIP" evidence="3">
    <location>
        <begin position="26"/>
        <end position="89"/>
    </location>
</feature>
<feature type="region of interest" description="Disordered" evidence="4">
    <location>
        <begin position="1"/>
        <end position="58"/>
    </location>
</feature>
<feature type="region of interest" description="Basic motif" evidence="3">
    <location>
        <begin position="28"/>
        <end position="50"/>
    </location>
</feature>
<feature type="region of interest" description="Leucine-zipper" evidence="3">
    <location>
        <begin position="54"/>
        <end position="75"/>
    </location>
</feature>
<feature type="compositionally biased region" description="Low complexity" evidence="4">
    <location>
        <begin position="1"/>
        <end position="14"/>
    </location>
</feature>
<feature type="modified residue" description="Phosphoserine" evidence="2">
    <location>
        <position position="43"/>
    </location>
</feature>
<feature type="modified residue" description="Phosphothreonine" evidence="2">
    <location>
        <position position="48"/>
    </location>
</feature>
<dbReference type="EMBL" id="U15460">
    <property type="protein sequence ID" value="AAC50314.1"/>
    <property type="molecule type" value="mRNA"/>
</dbReference>
<dbReference type="EMBL" id="D42106">
    <property type="protein sequence ID" value="BAA07686.1"/>
    <property type="molecule type" value="mRNA"/>
</dbReference>
<dbReference type="EMBL" id="AF016898">
    <property type="protein sequence ID" value="AAC78243.1"/>
    <property type="molecule type" value="Genomic_DNA"/>
</dbReference>
<dbReference type="EMBL" id="AC007182">
    <property type="protein sequence ID" value="AAD51372.1"/>
    <property type="molecule type" value="Genomic_DNA"/>
</dbReference>
<dbReference type="EMBL" id="BC032294">
    <property type="protein sequence ID" value="AAH32294.1"/>
    <property type="molecule type" value="mRNA"/>
</dbReference>
<dbReference type="CCDS" id="CCDS9843.1"/>
<dbReference type="PIR" id="JC4799">
    <property type="entry name" value="JC4799"/>
</dbReference>
<dbReference type="RefSeq" id="NP_006390.1">
    <property type="nucleotide sequence ID" value="NM_006399.5"/>
</dbReference>
<dbReference type="SMR" id="Q16520"/>
<dbReference type="BioGRID" id="115792">
    <property type="interactions" value="22"/>
</dbReference>
<dbReference type="ComplexPortal" id="CPX-6413">
    <property type="entry name" value="bZIP transcription factor complex, ATF2-BATF"/>
</dbReference>
<dbReference type="ComplexPortal" id="CPX-6467">
    <property type="entry name" value="bZIP transcription factor complex, ATF3-BATF"/>
</dbReference>
<dbReference type="ComplexPortal" id="CPX-6522">
    <property type="entry name" value="bZIP transcription factor complex, ATF4-BATF"/>
</dbReference>
<dbReference type="ComplexPortal" id="CPX-6585">
    <property type="entry name" value="bZIP transcription factor complex, ATF5-BATF"/>
</dbReference>
<dbReference type="ComplexPortal" id="CPX-7002">
    <property type="entry name" value="bZIP transcription factor complex, BATF-BATF"/>
</dbReference>
<dbReference type="ComplexPortal" id="CPX-7003">
    <property type="entry name" value="bZIP transcription factor complex, BATF-JUNB"/>
</dbReference>
<dbReference type="ComplexPortal" id="CPX-7004">
    <property type="entry name" value="bZIP transcription factor complex, BATF-DDIT3"/>
</dbReference>
<dbReference type="ComplexPortal" id="CPX-7005">
    <property type="entry name" value="bZIP transcription factor complex, BATF-JUN"/>
</dbReference>
<dbReference type="ComplexPortal" id="CPX-7006">
    <property type="entry name" value="bZIP transcription factor complex, BATF-CEBPA"/>
</dbReference>
<dbReference type="ComplexPortal" id="CPX-7007">
    <property type="entry name" value="bZIP transcription factor complex, BATF-CEBPB"/>
</dbReference>
<dbReference type="ComplexPortal" id="CPX-7008">
    <property type="entry name" value="bZIP transcription factor complex, BATF-CEBPG"/>
</dbReference>
<dbReference type="ComplexPortal" id="CPX-7009">
    <property type="entry name" value="bZIP transcription factor complex, BATF-CEBPD"/>
</dbReference>
<dbReference type="ComplexPortal" id="CPX-7010">
    <property type="entry name" value="bZIP transcription factor complex, BATF-CEBPE"/>
</dbReference>
<dbReference type="ComplexPortal" id="CPX-7011">
    <property type="entry name" value="bZIP transcription factor complex, BATF-HLF"/>
</dbReference>
<dbReference type="ComplexPortal" id="CPX-7012">
    <property type="entry name" value="bZIP transcription factor complex, BACH1-BATF"/>
</dbReference>
<dbReference type="ComplexPortal" id="CPX-7013">
    <property type="entry name" value="bZIP transcription factor complex, BATF-JUND"/>
</dbReference>
<dbReference type="ComplexPortal" id="CPX-7014">
    <property type="entry name" value="bZIP transcription factor complex, BATF-DBP"/>
</dbReference>
<dbReference type="ComplexPortal" id="CPX-7015">
    <property type="entry name" value="bZIP transcription factor complex, BATF-NFE2L1"/>
</dbReference>
<dbReference type="ComplexPortal" id="CPX-7017">
    <property type="entry name" value="bZIP transcription factor complex, BATF-NFIL3"/>
</dbReference>
<dbReference type="ComplexPortal" id="CPX-7018">
    <property type="entry name" value="bZIP transcription factor complex, BATF-BATF3"/>
</dbReference>
<dbReference type="DIP" id="DIP-52482N"/>
<dbReference type="FunCoup" id="Q16520">
    <property type="interactions" value="2648"/>
</dbReference>
<dbReference type="IntAct" id="Q16520">
    <property type="interactions" value="35"/>
</dbReference>
<dbReference type="MINT" id="Q16520"/>
<dbReference type="STRING" id="9606.ENSP00000286639"/>
<dbReference type="GlyGen" id="Q16520">
    <property type="glycosylation" value="1 site, 1 O-linked glycan (1 site)"/>
</dbReference>
<dbReference type="iPTMnet" id="Q16520"/>
<dbReference type="PhosphoSitePlus" id="Q16520"/>
<dbReference type="BioMuta" id="BATF"/>
<dbReference type="DMDM" id="32171340"/>
<dbReference type="MassIVE" id="Q16520"/>
<dbReference type="PaxDb" id="9606-ENSP00000286639"/>
<dbReference type="PeptideAtlas" id="Q16520"/>
<dbReference type="ProteomicsDB" id="60892"/>
<dbReference type="Antibodypedia" id="25838">
    <property type="antibodies" value="402 antibodies from 35 providers"/>
</dbReference>
<dbReference type="DNASU" id="10538"/>
<dbReference type="Ensembl" id="ENST00000286639.8">
    <property type="protein sequence ID" value="ENSP00000286639.6"/>
    <property type="gene ID" value="ENSG00000156127.8"/>
</dbReference>
<dbReference type="GeneID" id="10538"/>
<dbReference type="KEGG" id="hsa:10538"/>
<dbReference type="MANE-Select" id="ENST00000286639.8">
    <property type="protein sequence ID" value="ENSP00000286639.6"/>
    <property type="RefSeq nucleotide sequence ID" value="NM_006399.5"/>
    <property type="RefSeq protein sequence ID" value="NP_006390.1"/>
</dbReference>
<dbReference type="UCSC" id="uc001xrr.4">
    <property type="organism name" value="human"/>
</dbReference>
<dbReference type="AGR" id="HGNC:958"/>
<dbReference type="CTD" id="10538"/>
<dbReference type="DisGeNET" id="10538"/>
<dbReference type="GeneCards" id="BATF"/>
<dbReference type="HGNC" id="HGNC:958">
    <property type="gene designation" value="BATF"/>
</dbReference>
<dbReference type="HPA" id="ENSG00000156127">
    <property type="expression patterns" value="Tissue enhanced (bone marrow, lymphoid tissue)"/>
</dbReference>
<dbReference type="MIM" id="612476">
    <property type="type" value="gene"/>
</dbReference>
<dbReference type="neXtProt" id="NX_Q16520"/>
<dbReference type="OpenTargets" id="ENSG00000156127"/>
<dbReference type="PharmGKB" id="PA25268"/>
<dbReference type="VEuPathDB" id="HostDB:ENSG00000156127"/>
<dbReference type="eggNOG" id="KOG1414">
    <property type="taxonomic scope" value="Eukaryota"/>
</dbReference>
<dbReference type="GeneTree" id="ENSGT00940000159745"/>
<dbReference type="HOGENOM" id="CLU_088612_4_0_1"/>
<dbReference type="InParanoid" id="Q16520"/>
<dbReference type="OMA" id="NSHETHC"/>
<dbReference type="OrthoDB" id="295274at2759"/>
<dbReference type="PAN-GO" id="Q16520">
    <property type="GO annotations" value="4 GO annotations based on evolutionary models"/>
</dbReference>
<dbReference type="PhylomeDB" id="Q16520"/>
<dbReference type="TreeFam" id="TF332340"/>
<dbReference type="PathwayCommons" id="Q16520"/>
<dbReference type="Reactome" id="R-HSA-6785807">
    <property type="pathway name" value="Interleukin-4 and Interleukin-13 signaling"/>
</dbReference>
<dbReference type="SignaLink" id="Q16520"/>
<dbReference type="BioGRID-ORCS" id="10538">
    <property type="hits" value="14 hits in 1174 CRISPR screens"/>
</dbReference>
<dbReference type="ChiTaRS" id="BATF">
    <property type="organism name" value="human"/>
</dbReference>
<dbReference type="GeneWiki" id="BATF_(gene)"/>
<dbReference type="GenomeRNAi" id="10538"/>
<dbReference type="Pharos" id="Q16520">
    <property type="development level" value="Tbio"/>
</dbReference>
<dbReference type="PRO" id="PR:Q16520"/>
<dbReference type="Proteomes" id="UP000005640">
    <property type="component" value="Chromosome 14"/>
</dbReference>
<dbReference type="RNAct" id="Q16520">
    <property type="molecule type" value="protein"/>
</dbReference>
<dbReference type="Bgee" id="ENSG00000156127">
    <property type="expression patterns" value="Expressed in granulocyte and 131 other cell types or tissues"/>
</dbReference>
<dbReference type="ExpressionAtlas" id="Q16520">
    <property type="expression patterns" value="baseline and differential"/>
</dbReference>
<dbReference type="GO" id="GO:0000785">
    <property type="term" value="C:chromatin"/>
    <property type="evidence" value="ECO:0000247"/>
    <property type="project" value="NTNU_SB"/>
</dbReference>
<dbReference type="GO" id="GO:0005737">
    <property type="term" value="C:cytoplasm"/>
    <property type="evidence" value="ECO:0000250"/>
    <property type="project" value="UniProtKB"/>
</dbReference>
<dbReference type="GO" id="GO:0005654">
    <property type="term" value="C:nucleoplasm"/>
    <property type="evidence" value="ECO:0000314"/>
    <property type="project" value="HPA"/>
</dbReference>
<dbReference type="GO" id="GO:0005634">
    <property type="term" value="C:nucleus"/>
    <property type="evidence" value="ECO:0000250"/>
    <property type="project" value="UniProtKB"/>
</dbReference>
<dbReference type="GO" id="GO:0090575">
    <property type="term" value="C:RNA polymerase II transcription regulator complex"/>
    <property type="evidence" value="ECO:0000353"/>
    <property type="project" value="ComplexPortal"/>
</dbReference>
<dbReference type="GO" id="GO:0001228">
    <property type="term" value="F:DNA-binding transcription activator activity, RNA polymerase II-specific"/>
    <property type="evidence" value="ECO:0007669"/>
    <property type="project" value="Ensembl"/>
</dbReference>
<dbReference type="GO" id="GO:0003700">
    <property type="term" value="F:DNA-binding transcription factor activity"/>
    <property type="evidence" value="ECO:0000250"/>
    <property type="project" value="UniProtKB"/>
</dbReference>
<dbReference type="GO" id="GO:0000981">
    <property type="term" value="F:DNA-binding transcription factor activity, RNA polymerase II-specific"/>
    <property type="evidence" value="ECO:0000247"/>
    <property type="project" value="NTNU_SB"/>
</dbReference>
<dbReference type="GO" id="GO:0000978">
    <property type="term" value="F:RNA polymerase II cis-regulatory region sequence-specific DNA binding"/>
    <property type="evidence" value="ECO:0000318"/>
    <property type="project" value="GO_Central"/>
</dbReference>
<dbReference type="GO" id="GO:0043565">
    <property type="term" value="F:sequence-specific DNA binding"/>
    <property type="evidence" value="ECO:0000250"/>
    <property type="project" value="UniProtKB"/>
</dbReference>
<dbReference type="GO" id="GO:1990837">
    <property type="term" value="F:sequence-specific double-stranded DNA binding"/>
    <property type="evidence" value="ECO:0000314"/>
    <property type="project" value="ARUK-UCL"/>
</dbReference>
<dbReference type="GO" id="GO:0042832">
    <property type="term" value="P:defense response to protozoan"/>
    <property type="evidence" value="ECO:0000250"/>
    <property type="project" value="UniProtKB"/>
</dbReference>
<dbReference type="GO" id="GO:0006974">
    <property type="term" value="P:DNA damage response"/>
    <property type="evidence" value="ECO:0000250"/>
    <property type="project" value="UniProtKB"/>
</dbReference>
<dbReference type="GO" id="GO:0030330">
    <property type="term" value="P:DNA damage response, signal transduction by p53 class mediator"/>
    <property type="evidence" value="ECO:0000250"/>
    <property type="project" value="UniProtKB"/>
</dbReference>
<dbReference type="GO" id="GO:0060218">
    <property type="term" value="P:hematopoietic stem cell differentiation"/>
    <property type="evidence" value="ECO:0000250"/>
    <property type="project" value="UniProtKB"/>
</dbReference>
<dbReference type="GO" id="GO:0140467">
    <property type="term" value="P:integrated stress response signaling"/>
    <property type="evidence" value="ECO:0000303"/>
    <property type="project" value="ComplexPortal"/>
</dbReference>
<dbReference type="GO" id="GO:0045190">
    <property type="term" value="P:isotype switching"/>
    <property type="evidence" value="ECO:0000250"/>
    <property type="project" value="UniProtKB"/>
</dbReference>
<dbReference type="GO" id="GO:0002320">
    <property type="term" value="P:lymphoid progenitor cell differentiation"/>
    <property type="evidence" value="ECO:0000250"/>
    <property type="project" value="UniProtKB"/>
</dbReference>
<dbReference type="GO" id="GO:0043011">
    <property type="term" value="P:myeloid dendritic cell differentiation"/>
    <property type="evidence" value="ECO:0000250"/>
    <property type="project" value="UniProtKB"/>
</dbReference>
<dbReference type="GO" id="GO:0001819">
    <property type="term" value="P:positive regulation of cytokine production"/>
    <property type="evidence" value="ECO:0000250"/>
    <property type="project" value="UniProtKB"/>
</dbReference>
<dbReference type="GO" id="GO:2000319">
    <property type="term" value="P:regulation of T-helper 17 cell differentiation"/>
    <property type="evidence" value="ECO:0000303"/>
    <property type="project" value="ComplexPortal"/>
</dbReference>
<dbReference type="GO" id="GO:0006357">
    <property type="term" value="P:regulation of transcription by RNA polymerase II"/>
    <property type="evidence" value="ECO:0000318"/>
    <property type="project" value="GO_Central"/>
</dbReference>
<dbReference type="GO" id="GO:0072539">
    <property type="term" value="P:T-helper 17 cell differentiation"/>
    <property type="evidence" value="ECO:0000250"/>
    <property type="project" value="UniProtKB"/>
</dbReference>
<dbReference type="GO" id="GO:0072540">
    <property type="term" value="P:T-helper 17 cell lineage commitment"/>
    <property type="evidence" value="ECO:0000250"/>
    <property type="project" value="UniProtKB"/>
</dbReference>
<dbReference type="GO" id="GO:0045064">
    <property type="term" value="P:T-helper 2 cell differentiation"/>
    <property type="evidence" value="ECO:0000250"/>
    <property type="project" value="UniProtKB"/>
</dbReference>
<dbReference type="CDD" id="cd14701">
    <property type="entry name" value="bZIP_BATF"/>
    <property type="match status" value="1"/>
</dbReference>
<dbReference type="FunFam" id="1.20.5.170:FF:000043">
    <property type="entry name" value="Basic leucine zipper transcriptional factor ATF-like"/>
    <property type="match status" value="1"/>
</dbReference>
<dbReference type="Gene3D" id="1.20.5.170">
    <property type="match status" value="1"/>
</dbReference>
<dbReference type="InterPro" id="IPR000837">
    <property type="entry name" value="AP-1"/>
</dbReference>
<dbReference type="InterPro" id="IPR004827">
    <property type="entry name" value="bZIP"/>
</dbReference>
<dbReference type="InterPro" id="IPR046347">
    <property type="entry name" value="bZIP_sf"/>
</dbReference>
<dbReference type="PANTHER" id="PTHR23351:SF14">
    <property type="entry name" value="BASIC LEUCINE ZIPPER TRANSCRIPTIONAL FACTOR ATF-LIKE"/>
    <property type="match status" value="1"/>
</dbReference>
<dbReference type="PANTHER" id="PTHR23351">
    <property type="entry name" value="FOS TRANSCRIPTION FACTOR-RELATED"/>
    <property type="match status" value="1"/>
</dbReference>
<dbReference type="Pfam" id="PF00170">
    <property type="entry name" value="bZIP_1"/>
    <property type="match status" value="1"/>
</dbReference>
<dbReference type="PRINTS" id="PR00042">
    <property type="entry name" value="LEUZIPPRFOS"/>
</dbReference>
<dbReference type="SMART" id="SM00338">
    <property type="entry name" value="BRLZ"/>
    <property type="match status" value="1"/>
</dbReference>
<dbReference type="SUPFAM" id="SSF57959">
    <property type="entry name" value="Leucine zipper domain"/>
    <property type="match status" value="1"/>
</dbReference>
<dbReference type="PROSITE" id="PS50217">
    <property type="entry name" value="BZIP"/>
    <property type="match status" value="1"/>
</dbReference>
<dbReference type="PROSITE" id="PS00036">
    <property type="entry name" value="BZIP_BASIC"/>
    <property type="match status" value="1"/>
</dbReference>
<proteinExistence type="evidence at protein level"/>
<protein>
    <recommendedName>
        <fullName>Basic leucine zipper transcriptional factor ATF-like</fullName>
    </recommendedName>
    <alternativeName>
        <fullName>B-cell-activating transcription factor</fullName>
        <shortName>B-ATF</shortName>
    </alternativeName>
    <alternativeName>
        <fullName>SF-HT-activated gene 2 protein</fullName>
        <shortName>SFA-2</shortName>
    </alternativeName>
</protein>
<keyword id="KW-0010">Activator</keyword>
<keyword id="KW-0963">Cytoplasm</keyword>
<keyword id="KW-0221">Differentiation</keyword>
<keyword id="KW-0238">DNA-binding</keyword>
<keyword id="KW-0539">Nucleus</keyword>
<keyword id="KW-0597">Phosphoprotein</keyword>
<keyword id="KW-1267">Proteomics identification</keyword>
<keyword id="KW-1185">Reference proteome</keyword>
<keyword id="KW-0678">Repressor</keyword>
<keyword id="KW-0804">Transcription</keyword>
<keyword id="KW-0805">Transcription regulation</keyword>
<accession>Q16520</accession>
<organism>
    <name type="scientific">Homo sapiens</name>
    <name type="common">Human</name>
    <dbReference type="NCBI Taxonomy" id="9606"/>
    <lineage>
        <taxon>Eukaryota</taxon>
        <taxon>Metazoa</taxon>
        <taxon>Chordata</taxon>
        <taxon>Craniata</taxon>
        <taxon>Vertebrata</taxon>
        <taxon>Euteleostomi</taxon>
        <taxon>Mammalia</taxon>
        <taxon>Eutheria</taxon>
        <taxon>Euarchontoglires</taxon>
        <taxon>Primates</taxon>
        <taxon>Haplorrhini</taxon>
        <taxon>Catarrhini</taxon>
        <taxon>Hominidae</taxon>
        <taxon>Homo</taxon>
    </lineage>
</organism>
<sequence length="125" mass="14120">MPHSSDSSDSSFSRSPPPGKQDSSDDVRRVQRREKNRIAAQKSRQRQTQKADTLHLESEDLEKQNAALRKEIKQLTEELKYFTSVLNSHEPLCSVLAASTPSPPEVVYSAHAFHQPHVSSPRFQP</sequence>
<comment type="function">
    <text evidence="1">AP-1 family transcription factor that controls the differentiation of lineage-specific cells in the immune system: specifically mediates the differentiation of T-helper 17 cells (Th17), follicular T-helper cells (TfH), CD8(+) dendritic cells and class-switch recombination (CSR) in B-cells. Acts via the formation of a heterodimer with JUNB that recognizes and binds DNA sequence 5'-TGA[CG]TCA-3'. The BATF-JUNB heterodimer also forms a complex with IRF4 (or IRF8) in immune cells, leading to recognition of AICE sequence (5'-TGAnTCA/GAAA-3'), an immune-specific regulatory element, followed by cooperative binding of BATF and IRF4 (or IRF8) and activation of genes. Controls differentiation of T-helper cells producing interleukin-17 (Th17 cells) by binding to Th17-associated gene promoters: regulates expression of the transcription factor RORC itself and RORC target genes such as IL17 (IL17A or IL17B). Also involved in differentiation of follicular T-helper cells (TfH) by directing expression of BCL6 and MAF. In B-cells, involved in class-switch recombination (CSR) by controlling the expression of both AICDA and of germline transcripts of the intervening heavy-chain region and constant heavy-chain region (I(H)-C(H)). Following infection, can participate in CD8(+) dendritic cell differentiation via interaction with IRF4 and IRF8 to mediate cooperative gene activation. Regulates effector CD8(+) T-cell differentiation by regulating expression of SIRT1. Following DNA damage, part of a differentiation checkpoint that limits self-renewal of hematopoietic stem cells (HSCs): up-regulated by STAT3, leading to differentiation of HSCs, thereby restricting self-renewal of HSCs (By similarity).</text>
</comment>
<comment type="subunit">
    <text evidence="1 8 10">Heterodimer; mainly heterodimerizes with JUNB. The BATF-JUNB heterodimer interacts with IRF4 and IRF8. Interacts (via bZIP domain) with IRF4 and IRF8; the interaction is direct (By similarity). Also forms heterodimers with JUN and JUND. Also interacts with IFI35.</text>
</comment>
<comment type="interaction">
    <interactant intactId="EBI-749503">
        <id>Q16520</id>
    </interactant>
    <interactant intactId="EBI-1170906">
        <id>P15336</id>
        <label>ATF2</label>
    </interactant>
    <organismsDiffer>false</organismsDiffer>
    <experiments>2</experiments>
</comment>
<comment type="interaction">
    <interactant intactId="EBI-749503">
        <id>Q16520</id>
    </interactant>
    <interactant intactId="EBI-712767">
        <id>P18847</id>
        <label>ATF3</label>
    </interactant>
    <organismsDiffer>false</organismsDiffer>
    <experiments>2</experiments>
</comment>
<comment type="interaction">
    <interactant intactId="EBI-749503">
        <id>Q16520</id>
    </interactant>
    <interactant intactId="EBI-492498">
        <id>P18848</id>
        <label>ATF4</label>
    </interactant>
    <organismsDiffer>false</organismsDiffer>
    <experiments>3</experiments>
</comment>
<comment type="interaction">
    <interactant intactId="EBI-749503">
        <id>Q16520</id>
    </interactant>
    <interactant intactId="EBI-1172054">
        <id>P49715</id>
        <label>CEBPA</label>
    </interactant>
    <organismsDiffer>false</organismsDiffer>
    <experiments>3</experiments>
</comment>
<comment type="interaction">
    <interactant intactId="EBI-749503">
        <id>Q16520</id>
    </interactant>
    <interactant intactId="EBI-969696">
        <id>P17676</id>
        <label>CEBPB</label>
    </interactant>
    <organismsDiffer>false</organismsDiffer>
    <experiments>2</experiments>
</comment>
<comment type="interaction">
    <interactant intactId="EBI-749503">
        <id>Q16520</id>
    </interactant>
    <interactant intactId="EBI-3907048">
        <id>Q15744</id>
        <label>CEBPE</label>
    </interactant>
    <organismsDiffer>false</organismsDiffer>
    <experiments>2</experiments>
</comment>
<comment type="interaction">
    <interactant intactId="EBI-749503">
        <id>Q16520</id>
    </interactant>
    <interactant intactId="EBI-740209">
        <id>P53567</id>
        <label>CEBPG</label>
    </interactant>
    <organismsDiffer>false</organismsDiffer>
    <experiments>4</experiments>
</comment>
<comment type="interaction">
    <interactant intactId="EBI-749503">
        <id>Q16520</id>
    </interactant>
    <interactant intactId="EBI-3904738">
        <id>P10176</id>
        <label>COX8A</label>
    </interactant>
    <organismsDiffer>false</organismsDiffer>
    <experiments>3</experiments>
</comment>
<comment type="interaction">
    <interactant intactId="EBI-749503">
        <id>Q16520</id>
    </interactant>
    <interactant intactId="EBI-3908088">
        <id>Q10586</id>
        <label>DBP</label>
    </interactant>
    <organismsDiffer>false</organismsDiffer>
    <experiments>2</experiments>
</comment>
<comment type="interaction">
    <interactant intactId="EBI-749503">
        <id>Q16520</id>
    </interactant>
    <interactant intactId="EBI-742651">
        <id>P35638</id>
        <label>DDIT3</label>
    </interactant>
    <organismsDiffer>false</organismsDiffer>
    <experiments>8</experiments>
</comment>
<comment type="interaction">
    <interactant intactId="EBI-749503">
        <id>Q16520</id>
    </interactant>
    <interactant intactId="EBI-10976677">
        <id>G5E9A7</id>
        <label>DMWD</label>
    </interactant>
    <organismsDiffer>false</organismsDiffer>
    <experiments>3</experiments>
</comment>
<comment type="interaction">
    <interactant intactId="EBI-749503">
        <id>Q16520</id>
    </interactant>
    <interactant intactId="EBI-348399">
        <id>P22607</id>
        <label>FGFR3</label>
    </interactant>
    <organismsDiffer>false</organismsDiffer>
    <experiments>3</experiments>
</comment>
<comment type="interaction">
    <interactant intactId="EBI-749503">
        <id>Q16520</id>
    </interactant>
    <interactant intactId="EBI-724143">
        <id>P41250</id>
        <label>GARS1</label>
    </interactant>
    <organismsDiffer>false</organismsDiffer>
    <experiments>3</experiments>
</comment>
<comment type="interaction">
    <interactant intactId="EBI-749503">
        <id>Q16520</id>
    </interactant>
    <interactant intactId="EBI-1955541">
        <id>Q53GS7</id>
        <label>GLE1</label>
    </interactant>
    <organismsDiffer>false</organismsDiffer>
    <experiments>3</experiments>
</comment>
<comment type="interaction">
    <interactant intactId="EBI-749503">
        <id>Q16520</id>
    </interactant>
    <interactant intactId="EBI-349832">
        <id>Q9HD26</id>
        <label>GOPC</label>
    </interactant>
    <organismsDiffer>false</organismsDiffer>
    <experiments>3</experiments>
</comment>
<comment type="interaction">
    <interactant intactId="EBI-749503">
        <id>Q16520</id>
    </interactant>
    <interactant intactId="EBI-351506">
        <id>P06396</id>
        <label>GSN</label>
    </interactant>
    <organismsDiffer>false</organismsDiffer>
    <experiments>3</experiments>
</comment>
<comment type="interaction">
    <interactant intactId="EBI-749503">
        <id>Q16520</id>
    </interactant>
    <interactant intactId="EBI-2798854">
        <id>Q16534</id>
        <label>HLF</label>
    </interactant>
    <organismsDiffer>false</organismsDiffer>
    <experiments>2</experiments>
</comment>
<comment type="interaction">
    <interactant intactId="EBI-749503">
        <id>Q16520</id>
    </interactant>
    <interactant intactId="EBI-466029">
        <id>P42858</id>
        <label>HTT</label>
    </interactant>
    <organismsDiffer>false</organismsDiffer>
    <experiments>12</experiments>
</comment>
<comment type="interaction">
    <interactant intactId="EBI-749503">
        <id>Q16520</id>
    </interactant>
    <interactant intactId="EBI-852823">
        <id>P05412</id>
        <label>JUN</label>
    </interactant>
    <organismsDiffer>false</organismsDiffer>
    <experiments>4</experiments>
</comment>
<comment type="interaction">
    <interactant intactId="EBI-749503">
        <id>Q16520</id>
    </interactant>
    <interactant intactId="EBI-748062">
        <id>P17275</id>
        <label>JUNB</label>
    </interactant>
    <organismsDiffer>false</organismsDiffer>
    <experiments>45</experiments>
</comment>
<comment type="interaction">
    <interactant intactId="EBI-749503">
        <id>Q16520</id>
    </interactant>
    <interactant intactId="EBI-2682803">
        <id>P17535</id>
        <label>JUND</label>
    </interactant>
    <organismsDiffer>false</organismsDiffer>
    <experiments>2</experiments>
</comment>
<comment type="interaction">
    <interactant intactId="EBI-749503">
        <id>Q16520</id>
    </interactant>
    <interactant intactId="EBI-10975473">
        <id>O60333-2</id>
        <label>KIF1B</label>
    </interactant>
    <organismsDiffer>false</organismsDiffer>
    <experiments>3</experiments>
</comment>
<comment type="interaction">
    <interactant intactId="EBI-749503">
        <id>Q16520</id>
    </interactant>
    <interactant intactId="EBI-988601">
        <id>O43933</id>
        <label>PEX1</label>
    </interactant>
    <organismsDiffer>false</organismsDiffer>
    <experiments>3</experiments>
</comment>
<comment type="interaction">
    <interactant intactId="EBI-749503">
        <id>Q16520</id>
    </interactant>
    <interactant intactId="EBI-749195">
        <id>P60891</id>
        <label>PRPS1</label>
    </interactant>
    <organismsDiffer>false</organismsDiffer>
    <experiments>3</experiments>
</comment>
<comment type="interaction">
    <interactant intactId="EBI-749503">
        <id>Q16520</id>
    </interactant>
    <interactant intactId="EBI-5235340">
        <id>Q7Z699</id>
        <label>SPRED1</label>
    </interactant>
    <organismsDiffer>false</organismsDiffer>
    <experiments>3</experiments>
</comment>
<comment type="interaction">
    <interactant intactId="EBI-749503">
        <id>Q16520</id>
    </interactant>
    <interactant intactId="EBI-720609">
        <id>O76024</id>
        <label>WFS1</label>
    </interactant>
    <organismsDiffer>false</organismsDiffer>
    <experiments>3</experiments>
</comment>
<comment type="subcellular location">
    <subcellularLocation>
        <location evidence="3">Nucleus</location>
    </subcellularLocation>
    <subcellularLocation>
        <location evidence="1">Cytoplasm</location>
    </subcellularLocation>
    <text evidence="1">Present in the nucleus and cytoplasm, but shows increased nuclear translocation after activation of T-cells.</text>
</comment>
<comment type="tissue specificity">
    <text evidence="5 8 9">Expressed at highest levels in lung, and at lower levels in placenta, liver, kidney, spleen, and peripheral blood. Detected in SW480 colorectal cancer cell line and several hematopoietic tumor cell lines, including Raji Burkitt's lymphoma. Strongly expressed in mature B- and T-lymphocytes. Also expressed in moderate levels in lymph node and appendix and at low levels in thymus and bone marrow (PubMed:10777209).</text>
</comment>
<comment type="induction">
    <text evidence="6 7">Up-regulated by PDCD1 following infection by HIV-1 virus, leading to inhibit T-cell functions and exhaust T-cells. Up-regulated by Epstein-Barr virus (EBV) protein EBNA2 following infection by EBV.</text>
</comment>
<comment type="PTM">
    <text evidence="1">Phosphorylated on serine and threonine residues and at least one tyrosine residue. Phosphorylation at Ser-43 inhibit DNA binding activity and transforms it as a negative regulator of AP-1 mediated transcription (By similarity).</text>
</comment>
<comment type="PTM">
    <text evidence="1">Phosphorylated.</text>
</comment>
<comment type="similarity">
    <text evidence="11">Belongs to the bZIP family.</text>
</comment>
<reference key="1">
    <citation type="journal article" date="1995" name="Oncogene">
        <title>B-ATF: a novel human bZIP protein that associates with members of the AP-1 transcription factor family.</title>
        <authorList>
            <person name="Dorsey M.J."/>
            <person name="Tae H.-J."/>
            <person name="Sollenberger K.G."/>
            <person name="Mascarenhas N.T."/>
            <person name="Johansen L.M."/>
            <person name="Taparowsky E.J."/>
        </authorList>
    </citation>
    <scope>NUCLEOTIDE SEQUENCE [MRNA]</scope>
    <scope>INTERACTION WITH JUN PROTEINS</scope>
    <scope>TISSUE SPECIFICITY</scope>
</reference>
<reference key="2">
    <citation type="journal article" date="1996" name="Biochem. Biophys. Res. Commun.">
        <title>SFA-2, a novel bZIP transcription factor induced by human T-cell leukemia virus type I, is highly expressed in mature lymphocytes.</title>
        <authorList>
            <person name="Hasegawa H."/>
            <person name="Utsunomiya Y."/>
            <person name="Kishimoto K."/>
            <person name="Tange Y."/>
            <person name="Yasukawa M."/>
            <person name="Fujita S."/>
        </authorList>
    </citation>
    <scope>NUCLEOTIDE SEQUENCE [MRNA]</scope>
    <scope>TISSUE SPECIFICITY</scope>
</reference>
<reference key="3">
    <citation type="journal article" date="1998" name="Mamm. Genome">
        <title>Genomic organization of human B-ATF, a target for regulation by EBV and HTLV-1.</title>
        <authorList>
            <person name="Meyer N.P."/>
            <person name="Johansen L.M."/>
            <person name="Tae H.-J."/>
            <person name="Budde P.P."/>
            <person name="Williams K.L."/>
            <person name="Taparowsky E.J."/>
        </authorList>
    </citation>
    <scope>NUCLEOTIDE SEQUENCE [GENOMIC DNA]</scope>
</reference>
<reference key="4">
    <citation type="journal article" date="2003" name="Nature">
        <title>The DNA sequence and analysis of human chromosome 14.</title>
        <authorList>
            <person name="Heilig R."/>
            <person name="Eckenberg R."/>
            <person name="Petit J.-L."/>
            <person name="Fonknechten N."/>
            <person name="Da Silva C."/>
            <person name="Cattolico L."/>
            <person name="Levy M."/>
            <person name="Barbe V."/>
            <person name="De Berardinis V."/>
            <person name="Ureta-Vidal A."/>
            <person name="Pelletier E."/>
            <person name="Vico V."/>
            <person name="Anthouard V."/>
            <person name="Rowen L."/>
            <person name="Madan A."/>
            <person name="Qin S."/>
            <person name="Sun H."/>
            <person name="Du H."/>
            <person name="Pepin K."/>
            <person name="Artiguenave F."/>
            <person name="Robert C."/>
            <person name="Cruaud C."/>
            <person name="Bruels T."/>
            <person name="Jaillon O."/>
            <person name="Friedlander L."/>
            <person name="Samson G."/>
            <person name="Brottier P."/>
            <person name="Cure S."/>
            <person name="Segurens B."/>
            <person name="Aniere F."/>
            <person name="Samain S."/>
            <person name="Crespeau H."/>
            <person name="Abbasi N."/>
            <person name="Aiach N."/>
            <person name="Boscus D."/>
            <person name="Dickhoff R."/>
            <person name="Dors M."/>
            <person name="Dubois I."/>
            <person name="Friedman C."/>
            <person name="Gouyvenoux M."/>
            <person name="James R."/>
            <person name="Madan A."/>
            <person name="Mairey-Estrada B."/>
            <person name="Mangenot S."/>
            <person name="Martins N."/>
            <person name="Menard M."/>
            <person name="Oztas S."/>
            <person name="Ratcliffe A."/>
            <person name="Shaffer T."/>
            <person name="Trask B."/>
            <person name="Vacherie B."/>
            <person name="Bellemere C."/>
            <person name="Belser C."/>
            <person name="Besnard-Gonnet M."/>
            <person name="Bartol-Mavel D."/>
            <person name="Boutard M."/>
            <person name="Briez-Silla S."/>
            <person name="Combette S."/>
            <person name="Dufosse-Laurent V."/>
            <person name="Ferron C."/>
            <person name="Lechaplais C."/>
            <person name="Louesse C."/>
            <person name="Muselet D."/>
            <person name="Magdelenat G."/>
            <person name="Pateau E."/>
            <person name="Petit E."/>
            <person name="Sirvain-Trukniewicz P."/>
            <person name="Trybou A."/>
            <person name="Vega-Czarny N."/>
            <person name="Bataille E."/>
            <person name="Bluet E."/>
            <person name="Bordelais I."/>
            <person name="Dubois M."/>
            <person name="Dumont C."/>
            <person name="Guerin T."/>
            <person name="Haffray S."/>
            <person name="Hammadi R."/>
            <person name="Muanga J."/>
            <person name="Pellouin V."/>
            <person name="Robert D."/>
            <person name="Wunderle E."/>
            <person name="Gauguet G."/>
            <person name="Roy A."/>
            <person name="Sainte-Marthe L."/>
            <person name="Verdier J."/>
            <person name="Verdier-Discala C."/>
            <person name="Hillier L.W."/>
            <person name="Fulton L."/>
            <person name="McPherson J."/>
            <person name="Matsuda F."/>
            <person name="Wilson R."/>
            <person name="Scarpelli C."/>
            <person name="Gyapay G."/>
            <person name="Wincker P."/>
            <person name="Saurin W."/>
            <person name="Quetier F."/>
            <person name="Waterston R."/>
            <person name="Hood L."/>
            <person name="Weissenbach J."/>
        </authorList>
    </citation>
    <scope>NUCLEOTIDE SEQUENCE [LARGE SCALE GENOMIC DNA]</scope>
</reference>
<reference key="5">
    <citation type="journal article" date="2004" name="Genome Res.">
        <title>The status, quality, and expansion of the NIH full-length cDNA project: the Mammalian Gene Collection (MGC).</title>
        <authorList>
            <consortium name="The MGC Project Team"/>
        </authorList>
    </citation>
    <scope>NUCLEOTIDE SEQUENCE [LARGE SCALE MRNA]</scope>
    <source>
        <tissue>Melanoma</tissue>
    </source>
</reference>
<reference key="6">
    <citation type="journal article" date="1996" name="Biochem. Biophys. Res. Commun.">
        <title>IFP 35 forms complexes with B-ATF, a member of the AP1 family of transcription factors.</title>
        <authorList>
            <person name="Wang X."/>
            <person name="Johansen L.M."/>
            <person name="Tae H.-J."/>
            <person name="Taparowsky E.J."/>
        </authorList>
    </citation>
    <scope>INTERACTION WITH IFI35</scope>
</reference>
<reference key="7">
    <citation type="journal article" date="2000" name="Oncogene">
        <title>B-ATF functions as a negative regulator of AP-1 mediated transcription and blocks cellular transformation by Ras and Fos.</title>
        <authorList>
            <person name="Echlin D.R."/>
            <person name="Tae H.-J."/>
            <person name="Mitin N."/>
            <person name="Taparowsky E.J."/>
        </authorList>
    </citation>
    <scope>TISSUE SPECIFICITY</scope>
</reference>
<reference key="8">
    <citation type="journal article" date="2003" name="J. Virol.">
        <title>EBNA2 and activated Notch induce expression of BATF.</title>
        <authorList>
            <person name="Johansen L.M."/>
            <person name="Deppmann C.D."/>
            <person name="Erickson K.D."/>
            <person name="Coffin W.F. III"/>
            <person name="Thornton T.M."/>
            <person name="Humphrey S.E."/>
            <person name="Martin J.M."/>
            <person name="Taparowsky E.J."/>
        </authorList>
    </citation>
    <scope>INDUCTION</scope>
</reference>
<reference key="9">
    <citation type="journal article" date="2010" name="Nat. Med.">
        <title>Transcriptional analysis of HIV-specific CD8+ T cells shows that PD-1 inhibits T cell function by upregulating BATF.</title>
        <authorList>
            <person name="Quigley M."/>
            <person name="Pereyra F."/>
            <person name="Nilsson B."/>
            <person name="Porichis F."/>
            <person name="Fonseca C."/>
            <person name="Eichbaum Q."/>
            <person name="Julg B."/>
            <person name="Jesneck J.L."/>
            <person name="Brosnahan K."/>
            <person name="Imam S."/>
            <person name="Russell K."/>
            <person name="Toth I."/>
            <person name="Piechocka-Trocha A."/>
            <person name="Dolfi D."/>
            <person name="Angelosanto J."/>
            <person name="Crawford A."/>
            <person name="Shin H."/>
            <person name="Kwon D.S."/>
            <person name="Zupkosky J."/>
            <person name="Francisco L."/>
            <person name="Freeman G.J."/>
            <person name="Wherry E.J."/>
            <person name="Kaufmann D.E."/>
            <person name="Walker B.D."/>
            <person name="Ebert B."/>
            <person name="Haining W.N."/>
        </authorList>
    </citation>
    <scope>INDUCTION</scope>
</reference>
<evidence type="ECO:0000250" key="1"/>
<evidence type="ECO:0000250" key="2">
    <source>
        <dbReference type="UniProtKB" id="O35284"/>
    </source>
</evidence>
<evidence type="ECO:0000255" key="3">
    <source>
        <dbReference type="PROSITE-ProRule" id="PRU00978"/>
    </source>
</evidence>
<evidence type="ECO:0000256" key="4">
    <source>
        <dbReference type="SAM" id="MobiDB-lite"/>
    </source>
</evidence>
<evidence type="ECO:0000269" key="5">
    <source>
    </source>
</evidence>
<evidence type="ECO:0000269" key="6">
    <source>
    </source>
</evidence>
<evidence type="ECO:0000269" key="7">
    <source>
    </source>
</evidence>
<evidence type="ECO:0000269" key="8">
    <source>
    </source>
</evidence>
<evidence type="ECO:0000269" key="9">
    <source>
    </source>
</evidence>
<evidence type="ECO:0000269" key="10">
    <source>
    </source>
</evidence>
<evidence type="ECO:0000305" key="11"/>
<name>BATF_HUMAN</name>
<gene>
    <name type="primary">BATF</name>
</gene>